<accession>A0A286YFK9</accession>
<keyword id="KW-0472">Membrane</keyword>
<keyword id="KW-1185">Reference proteome</keyword>
<keyword id="KW-0812">Transmembrane</keyword>
<keyword id="KW-1133">Transmembrane helix</keyword>
<evidence type="ECO:0000255" key="1"/>
<evidence type="ECO:0000305" key="2"/>
<evidence type="ECO:0000312" key="3">
    <source>
        <dbReference type="HGNC" id="HGNC:54074"/>
    </source>
</evidence>
<comment type="subcellular location">
    <subcellularLocation>
        <location evidence="1">Membrane</location>
        <topology evidence="1">Single-pass membrane protein</topology>
    </subcellularLocation>
</comment>
<organism>
    <name type="scientific">Homo sapiens</name>
    <name type="common">Human</name>
    <dbReference type="NCBI Taxonomy" id="9606"/>
    <lineage>
        <taxon>Eukaryota</taxon>
        <taxon>Metazoa</taxon>
        <taxon>Chordata</taxon>
        <taxon>Craniata</taxon>
        <taxon>Vertebrata</taxon>
        <taxon>Euteleostomi</taxon>
        <taxon>Mammalia</taxon>
        <taxon>Eutheria</taxon>
        <taxon>Euarchontoglires</taxon>
        <taxon>Primates</taxon>
        <taxon>Haplorrhini</taxon>
        <taxon>Catarrhini</taxon>
        <taxon>Hominidae</taxon>
        <taxon>Homo</taxon>
    </lineage>
</organism>
<name>SIM38_HUMAN</name>
<reference key="1">
    <citation type="journal article" date="2006" name="Nature">
        <title>Human chromosome 11 DNA sequence and analysis including novel gene identification.</title>
        <authorList>
            <person name="Taylor T.D."/>
            <person name="Noguchi H."/>
            <person name="Totoki Y."/>
            <person name="Toyoda A."/>
            <person name="Kuroki Y."/>
            <person name="Dewar K."/>
            <person name="Lloyd C."/>
            <person name="Itoh T."/>
            <person name="Takeda T."/>
            <person name="Kim D.-W."/>
            <person name="She X."/>
            <person name="Barlow K.F."/>
            <person name="Bloom T."/>
            <person name="Bruford E."/>
            <person name="Chang J.L."/>
            <person name="Cuomo C.A."/>
            <person name="Eichler E."/>
            <person name="FitzGerald M.G."/>
            <person name="Jaffe D.B."/>
            <person name="LaButti K."/>
            <person name="Nicol R."/>
            <person name="Park H.-S."/>
            <person name="Seaman C."/>
            <person name="Sougnez C."/>
            <person name="Yang X."/>
            <person name="Zimmer A.R."/>
            <person name="Zody M.C."/>
            <person name="Birren B.W."/>
            <person name="Nusbaum C."/>
            <person name="Fujiyama A."/>
            <person name="Hattori M."/>
            <person name="Rogers J."/>
            <person name="Lander E.S."/>
            <person name="Sakaki Y."/>
        </authorList>
    </citation>
    <scope>NUCLEOTIDE SEQUENCE [LARGE SCALE GENOMIC DNA]</scope>
</reference>
<protein>
    <recommendedName>
        <fullName evidence="2">Small integral membrane protein 38</fullName>
    </recommendedName>
</protein>
<feature type="chain" id="PRO_0000446324" description="Small integral membrane protein 38">
    <location>
        <begin position="1"/>
        <end position="51"/>
    </location>
</feature>
<feature type="transmembrane region" description="Helical" evidence="1">
    <location>
        <begin position="13"/>
        <end position="33"/>
    </location>
</feature>
<dbReference type="EMBL" id="AP003071">
    <property type="status" value="NOT_ANNOTATED_CDS"/>
    <property type="molecule type" value="Genomic_DNA"/>
</dbReference>
<dbReference type="CCDS" id="CCDS91523.1"/>
<dbReference type="RefSeq" id="NP_001356130.1">
    <property type="nucleotide sequence ID" value="NM_001369201.2"/>
</dbReference>
<dbReference type="RefSeq" id="NP_001381098.1">
    <property type="nucleotide sequence ID" value="NM_001394169.1"/>
</dbReference>
<dbReference type="STRING" id="9606.ENSP00000493332"/>
<dbReference type="BioMuta" id="ENSG00000284713"/>
<dbReference type="Ensembl" id="ENST00000641568.1">
    <property type="protein sequence ID" value="ENSP00000493332.1"/>
    <property type="gene ID" value="ENSG00000284713.2"/>
</dbReference>
<dbReference type="Ensembl" id="ENST00000686237.1">
    <property type="protein sequence ID" value="ENSP00000509996.1"/>
    <property type="gene ID" value="ENSG00000284713.2"/>
</dbReference>
<dbReference type="Ensembl" id="ENST00000686937.1">
    <property type="protein sequence ID" value="ENSP00000509659.1"/>
    <property type="gene ID" value="ENSG00000284713.2"/>
</dbReference>
<dbReference type="GeneID" id="107984345"/>
<dbReference type="MANE-Select" id="ENST00000686237.1">
    <property type="protein sequence ID" value="ENSP00000509996.1"/>
    <property type="RefSeq nucleotide sequence ID" value="NM_001369201.2"/>
    <property type="RefSeq protein sequence ID" value="NP_001356130.1"/>
</dbReference>
<dbReference type="AGR" id="HGNC:54074"/>
<dbReference type="GeneCards" id="SMIM38"/>
<dbReference type="HGNC" id="HGNC:54074">
    <property type="gene designation" value="SMIM38"/>
</dbReference>
<dbReference type="HPA" id="ENSG00000284713">
    <property type="expression patterns" value="Tissue enriched (stomach)"/>
</dbReference>
<dbReference type="neXtProt" id="NX_A0A286YFK9"/>
<dbReference type="VEuPathDB" id="HostDB:ENSG00000284713"/>
<dbReference type="GeneTree" id="ENSGT01070000254034"/>
<dbReference type="InParanoid" id="A0A286YFK9"/>
<dbReference type="OMA" id="RFLLWSC"/>
<dbReference type="PAN-GO" id="A0A286YFK9">
    <property type="GO annotations" value="0 GO annotations based on evolutionary models"/>
</dbReference>
<dbReference type="PRO" id="PR:A0A286YFK9"/>
<dbReference type="Proteomes" id="UP000005640">
    <property type="component" value="Chromosome 11"/>
</dbReference>
<dbReference type="Bgee" id="ENSG00000284713">
    <property type="expression patterns" value="Expressed in fundus of stomach and 88 other cell types or tissues"/>
</dbReference>
<dbReference type="GO" id="GO:0016020">
    <property type="term" value="C:membrane"/>
    <property type="evidence" value="ECO:0007669"/>
    <property type="project" value="UniProtKB-SubCell"/>
</dbReference>
<gene>
    <name evidence="3" type="primary">SMIM38</name>
</gene>
<proteinExistence type="inferred from homology"/>
<sequence>MTSWPGGSFGPDPLLALLVVILLARLILWSCLGTYIDYRLAQRRPQKPKQD</sequence>